<evidence type="ECO:0000255" key="1"/>
<feature type="chain" id="PRO_0000420180" description="Coiled-coil domain-containing protein 175">
    <location>
        <begin position="1"/>
        <end position="822"/>
    </location>
</feature>
<feature type="coiled-coil region" evidence="1">
    <location>
        <begin position="129"/>
        <end position="164"/>
    </location>
</feature>
<feature type="coiled-coil region" evidence="1">
    <location>
        <begin position="223"/>
        <end position="397"/>
    </location>
</feature>
<feature type="coiled-coil region" evidence="1">
    <location>
        <begin position="510"/>
        <end position="537"/>
    </location>
</feature>
<protein>
    <recommendedName>
        <fullName>Coiled-coil domain-containing protein 175</fullName>
    </recommendedName>
</protein>
<reference key="1">
    <citation type="journal article" date="2009" name="PLoS Biol.">
        <title>Lineage-specific biology revealed by a finished genome assembly of the mouse.</title>
        <authorList>
            <person name="Church D.M."/>
            <person name="Goodstadt L."/>
            <person name="Hillier L.W."/>
            <person name="Zody M.C."/>
            <person name="Goldstein S."/>
            <person name="She X."/>
            <person name="Bult C.J."/>
            <person name="Agarwala R."/>
            <person name="Cherry J.L."/>
            <person name="DiCuccio M."/>
            <person name="Hlavina W."/>
            <person name="Kapustin Y."/>
            <person name="Meric P."/>
            <person name="Maglott D."/>
            <person name="Birtle Z."/>
            <person name="Marques A.C."/>
            <person name="Graves T."/>
            <person name="Zhou S."/>
            <person name="Teague B."/>
            <person name="Potamousis K."/>
            <person name="Churas C."/>
            <person name="Place M."/>
            <person name="Herschleb J."/>
            <person name="Runnheim R."/>
            <person name="Forrest D."/>
            <person name="Amos-Landgraf J."/>
            <person name="Schwartz D.C."/>
            <person name="Cheng Z."/>
            <person name="Lindblad-Toh K."/>
            <person name="Eichler E.E."/>
            <person name="Ponting C.P."/>
        </authorList>
    </citation>
    <scope>NUCLEOTIDE SEQUENCE [LARGE SCALE GENOMIC DNA]</scope>
    <source>
        <strain>C57BL/6J</strain>
    </source>
</reference>
<gene>
    <name type="primary">Ccdc175</name>
</gene>
<accession>E9PVB3</accession>
<sequence length="822" mass="97122">MAIRSWTPEGFVNKKLVRPASVSTNLSLELCTFPTTLGSSVAANALEQLFVVEKSLQGDYFTCSEEVKTFLKDITVAVKKLEEMRKNTVELLEIESMELSRLYFLLETVPNSIHRELEECIADARKLNIIEISQIKRKIETMNNEVKFLTNKISELKSMNEVLGAKQAELAKRHEQYVLLLNQTLEEKAAATIYINDTYTRMNFEREEIELQKQCMQETTQLIEKQKQDYLEKKEYLAIRIKETKQSCDDKRKETYYKKKELTRLQNKIIKMKQTVTSGSVMISDQSIEINILHEAITIWKKKVEDMRRLCESLEEKLSFFVTQKQNLDTTSTEKKNAFVNKIQKLGEKIYKLNTENEDLREKLSTLLKQYKATLKEEEAVSLKKQMLSEEHQKQMMVITQKEAFLSQREHDIKFMENGFGVLNDLNRASREAYGRQIEVMAKNRQREIQRCVINQWRIFCTRKRHAHWLQKIKLSLKKIIIQIEIVEQKRFQLLEETKHRKKEINHFVHLIETLKEQLAQDKKDYVKKEERLIEELGTYETLILNEIQINKVKEEELGETLPQLQVAEEDFREKNRMLRSLHSDVSAKKQDEKTMSNTIFRYRKDIIRCTDGTENMKREIKHLRDLESEKTHKHFEILKNLENEIYVNDQKMALLILENQKLREYLAYLKKEINEYASKQVVTVQHSGDLSWQLIVQHSHYSDLLSGFQIIIKELVGTGEDTMQEIKSLVAKLQYRDEKIESISTWLVGGFERLRRLMEEDSPASLSKEDLQKLGKKQKNQEILRFSPSSHARRLTLSRICKMLKKQSRSRKKKHRPRTII</sequence>
<name>CC175_MOUSE</name>
<proteinExistence type="predicted"/>
<keyword id="KW-0175">Coiled coil</keyword>
<keyword id="KW-1185">Reference proteome</keyword>
<dbReference type="EMBL" id="AC110170">
    <property type="status" value="NOT_ANNOTATED_CDS"/>
    <property type="molecule type" value="Genomic_DNA"/>
</dbReference>
<dbReference type="EMBL" id="CR974486">
    <property type="status" value="NOT_ANNOTATED_CDS"/>
    <property type="molecule type" value="Genomic_DNA"/>
</dbReference>
<dbReference type="CCDS" id="CCDS49084.1"/>
<dbReference type="RefSeq" id="NP_082963.1">
    <property type="nucleotide sequence ID" value="NM_028687.1"/>
</dbReference>
<dbReference type="SMR" id="E9PVB3"/>
<dbReference type="BioGRID" id="216368">
    <property type="interactions" value="1"/>
</dbReference>
<dbReference type="FunCoup" id="E9PVB3">
    <property type="interactions" value="1"/>
</dbReference>
<dbReference type="STRING" id="10090.ENSMUSP00000021494"/>
<dbReference type="iPTMnet" id="E9PVB3"/>
<dbReference type="PhosphoSitePlus" id="E9PVB3"/>
<dbReference type="SwissPalm" id="E9PVB3"/>
<dbReference type="PaxDb" id="10090-ENSMUSP00000021494"/>
<dbReference type="ProteomicsDB" id="283717"/>
<dbReference type="Antibodypedia" id="100">
    <property type="antibodies" value="8 antibodies from 7 providers"/>
</dbReference>
<dbReference type="Ensembl" id="ENSMUST00000021494.6">
    <property type="protein sequence ID" value="ENSMUSP00000021494.5"/>
    <property type="gene ID" value="ENSMUSG00000021086.6"/>
</dbReference>
<dbReference type="GeneID" id="73936"/>
<dbReference type="KEGG" id="mmu:73936"/>
<dbReference type="UCSC" id="uc007nvh.2">
    <property type="organism name" value="mouse"/>
</dbReference>
<dbReference type="AGR" id="MGI:1921186"/>
<dbReference type="CTD" id="729665"/>
<dbReference type="MGI" id="MGI:1921186">
    <property type="gene designation" value="Ccdc175"/>
</dbReference>
<dbReference type="VEuPathDB" id="HostDB:ENSMUSG00000021086"/>
<dbReference type="eggNOG" id="ENOG502RXX0">
    <property type="taxonomic scope" value="Eukaryota"/>
</dbReference>
<dbReference type="GeneTree" id="ENSGT00390000001277"/>
<dbReference type="HOGENOM" id="CLU_345791_0_0_1"/>
<dbReference type="InParanoid" id="E9PVB3"/>
<dbReference type="OMA" id="VFMQKRK"/>
<dbReference type="OrthoDB" id="10031759at2759"/>
<dbReference type="PhylomeDB" id="E9PVB3"/>
<dbReference type="TreeFam" id="TF351236"/>
<dbReference type="BioGRID-ORCS" id="73936">
    <property type="hits" value="2 hits in 78 CRISPR screens"/>
</dbReference>
<dbReference type="ChiTaRS" id="Ccdc175">
    <property type="organism name" value="mouse"/>
</dbReference>
<dbReference type="PRO" id="PR:E9PVB3"/>
<dbReference type="Proteomes" id="UP000000589">
    <property type="component" value="Chromosome 12"/>
</dbReference>
<dbReference type="RNAct" id="E9PVB3">
    <property type="molecule type" value="protein"/>
</dbReference>
<dbReference type="Bgee" id="ENSMUSG00000021086">
    <property type="expression patterns" value="Expressed in spermatid and 9 other cell types or tissues"/>
</dbReference>
<dbReference type="InterPro" id="IPR038834">
    <property type="entry name" value="CCDC175"/>
</dbReference>
<dbReference type="PANTHER" id="PTHR35347">
    <property type="entry name" value="COILED-COIL DOMAIN-CONTAINING PROTEIN 175"/>
    <property type="match status" value="1"/>
</dbReference>
<dbReference type="PANTHER" id="PTHR35347:SF1">
    <property type="entry name" value="COILED-COIL DOMAIN-CONTAINING PROTEIN 175"/>
    <property type="match status" value="1"/>
</dbReference>
<organism>
    <name type="scientific">Mus musculus</name>
    <name type="common">Mouse</name>
    <dbReference type="NCBI Taxonomy" id="10090"/>
    <lineage>
        <taxon>Eukaryota</taxon>
        <taxon>Metazoa</taxon>
        <taxon>Chordata</taxon>
        <taxon>Craniata</taxon>
        <taxon>Vertebrata</taxon>
        <taxon>Euteleostomi</taxon>
        <taxon>Mammalia</taxon>
        <taxon>Eutheria</taxon>
        <taxon>Euarchontoglires</taxon>
        <taxon>Glires</taxon>
        <taxon>Rodentia</taxon>
        <taxon>Myomorpha</taxon>
        <taxon>Muroidea</taxon>
        <taxon>Muridae</taxon>
        <taxon>Murinae</taxon>
        <taxon>Mus</taxon>
        <taxon>Mus</taxon>
    </lineage>
</organism>